<name>PNP_STRTD</name>
<feature type="chain" id="PRO_0000329885" description="Polyribonucleotide nucleotidyltransferase">
    <location>
        <begin position="1"/>
        <end position="741"/>
    </location>
</feature>
<feature type="domain" description="KH" evidence="1">
    <location>
        <begin position="556"/>
        <end position="615"/>
    </location>
</feature>
<feature type="domain" description="S1 motif" evidence="1">
    <location>
        <begin position="625"/>
        <end position="693"/>
    </location>
</feature>
<feature type="region of interest" description="Disordered" evidence="2">
    <location>
        <begin position="696"/>
        <end position="741"/>
    </location>
</feature>
<feature type="compositionally biased region" description="Basic and acidic residues" evidence="2">
    <location>
        <begin position="698"/>
        <end position="713"/>
    </location>
</feature>
<feature type="compositionally biased region" description="Basic and acidic residues" evidence="2">
    <location>
        <begin position="723"/>
        <end position="741"/>
    </location>
</feature>
<feature type="binding site" evidence="1">
    <location>
        <position position="489"/>
    </location>
    <ligand>
        <name>Mg(2+)</name>
        <dbReference type="ChEBI" id="CHEBI:18420"/>
    </ligand>
</feature>
<feature type="binding site" evidence="1">
    <location>
        <position position="495"/>
    </location>
    <ligand>
        <name>Mg(2+)</name>
        <dbReference type="ChEBI" id="CHEBI:18420"/>
    </ligand>
</feature>
<evidence type="ECO:0000255" key="1">
    <source>
        <dbReference type="HAMAP-Rule" id="MF_01595"/>
    </source>
</evidence>
<evidence type="ECO:0000256" key="2">
    <source>
        <dbReference type="SAM" id="MobiDB-lite"/>
    </source>
</evidence>
<sequence length="741" mass="81031">MAKQTFEMTFEGRPLVVEVGQVAKQANGAVVVRYGDTTVLSVAVMSKKMATADFFPLQVNYEEKMYAAGKFPGGFSKREGRPSTDATLTARLIDRPIRPMFAEGFRNEVQVINTVLSYDENASAPMAAMFGSSLALSISDIPFNGPIAGVQVAYAAEDFIINPSASDKEVSHLDLIVAGTKEAINMVEAGAQELSEDIMLQALLKGHEAIQELVDFQNYIVAAVGKEKAEVELFQVNADLKAEIEAVYYDQLAKAVQVEEKLAREAATKAVKEEVLASYQERFAEDEDKETILRDVVEILEQMEHAEVRRLITEDKVRPDGRRVDEIRPLDAEIDFLPKVHGSGLFTRGQTQALSVLTLAPMSDTQLVDGLDPEYKKRFLHHYNFPQYSVGKTGRYGAPGRREIGHGVLGERALAQVLPSVEEFPYAIRLVAEVLESNGSSSQASICAGTLALMAGGVPIKAPVAGIAMGLISDGTNYTVLTDIQGLEDHFGDMDFKVAGTRLGITALQMDIKISGITPAILEEALAQAKVARFEILDVIESAIAEPRSELAPTAPKIDSIQIPVDKIKVVIGKGGETIDKIIAETGVTIDIDEEGLVQIFSSDQDAIDRAKTIISDLVREAKVGEVYTVPVVRIEKFGAFVHLFNKTDALVHISELAWKHTEHVEDVVKVGDMVTVKIIKIDEKGRVDASIKTLLPKPEKNEDGENGEEHRHCCCSHHKPDHHSESMEAPKKSDESETKE</sequence>
<gene>
    <name evidence="1" type="primary">pnp</name>
    <name type="ordered locus">STER_0114</name>
</gene>
<accession>Q03MV9</accession>
<protein>
    <recommendedName>
        <fullName evidence="1">Polyribonucleotide nucleotidyltransferase</fullName>
        <ecNumber evidence="1">2.7.7.8</ecNumber>
    </recommendedName>
    <alternativeName>
        <fullName evidence="1">Polynucleotide phosphorylase</fullName>
        <shortName evidence="1">PNPase</shortName>
    </alternativeName>
</protein>
<keyword id="KW-0963">Cytoplasm</keyword>
<keyword id="KW-0460">Magnesium</keyword>
<keyword id="KW-0479">Metal-binding</keyword>
<keyword id="KW-0548">Nucleotidyltransferase</keyword>
<keyword id="KW-0694">RNA-binding</keyword>
<keyword id="KW-0808">Transferase</keyword>
<proteinExistence type="inferred from homology"/>
<reference key="1">
    <citation type="journal article" date="2006" name="Proc. Natl. Acad. Sci. U.S.A.">
        <title>Comparative genomics of the lactic acid bacteria.</title>
        <authorList>
            <person name="Makarova K.S."/>
            <person name="Slesarev A."/>
            <person name="Wolf Y.I."/>
            <person name="Sorokin A."/>
            <person name="Mirkin B."/>
            <person name="Koonin E.V."/>
            <person name="Pavlov A."/>
            <person name="Pavlova N."/>
            <person name="Karamychev V."/>
            <person name="Polouchine N."/>
            <person name="Shakhova V."/>
            <person name="Grigoriev I."/>
            <person name="Lou Y."/>
            <person name="Rohksar D."/>
            <person name="Lucas S."/>
            <person name="Huang K."/>
            <person name="Goodstein D.M."/>
            <person name="Hawkins T."/>
            <person name="Plengvidhya V."/>
            <person name="Welker D."/>
            <person name="Hughes J."/>
            <person name="Goh Y."/>
            <person name="Benson A."/>
            <person name="Baldwin K."/>
            <person name="Lee J.-H."/>
            <person name="Diaz-Muniz I."/>
            <person name="Dosti B."/>
            <person name="Smeianov V."/>
            <person name="Wechter W."/>
            <person name="Barabote R."/>
            <person name="Lorca G."/>
            <person name="Altermann E."/>
            <person name="Barrangou R."/>
            <person name="Ganesan B."/>
            <person name="Xie Y."/>
            <person name="Rawsthorne H."/>
            <person name="Tamir D."/>
            <person name="Parker C."/>
            <person name="Breidt F."/>
            <person name="Broadbent J.R."/>
            <person name="Hutkins R."/>
            <person name="O'Sullivan D."/>
            <person name="Steele J."/>
            <person name="Unlu G."/>
            <person name="Saier M.H. Jr."/>
            <person name="Klaenhammer T."/>
            <person name="Richardson P."/>
            <person name="Kozyavkin S."/>
            <person name="Weimer B.C."/>
            <person name="Mills D.A."/>
        </authorList>
    </citation>
    <scope>NUCLEOTIDE SEQUENCE [LARGE SCALE GENOMIC DNA]</scope>
    <source>
        <strain>ATCC BAA-491 / LMD-9</strain>
    </source>
</reference>
<dbReference type="EC" id="2.7.7.8" evidence="1"/>
<dbReference type="EMBL" id="CP000419">
    <property type="protein sequence ID" value="ABJ65463.1"/>
    <property type="molecule type" value="Genomic_DNA"/>
</dbReference>
<dbReference type="RefSeq" id="WP_011680617.1">
    <property type="nucleotide sequence ID" value="NC_008532.1"/>
</dbReference>
<dbReference type="SMR" id="Q03MV9"/>
<dbReference type="KEGG" id="ste:STER_0114"/>
<dbReference type="HOGENOM" id="CLU_004217_2_2_9"/>
<dbReference type="GO" id="GO:0005829">
    <property type="term" value="C:cytosol"/>
    <property type="evidence" value="ECO:0007669"/>
    <property type="project" value="TreeGrafter"/>
</dbReference>
<dbReference type="GO" id="GO:0000175">
    <property type="term" value="F:3'-5'-RNA exonuclease activity"/>
    <property type="evidence" value="ECO:0007669"/>
    <property type="project" value="TreeGrafter"/>
</dbReference>
<dbReference type="GO" id="GO:0000287">
    <property type="term" value="F:magnesium ion binding"/>
    <property type="evidence" value="ECO:0007669"/>
    <property type="project" value="UniProtKB-UniRule"/>
</dbReference>
<dbReference type="GO" id="GO:0004654">
    <property type="term" value="F:polyribonucleotide nucleotidyltransferase activity"/>
    <property type="evidence" value="ECO:0007669"/>
    <property type="project" value="UniProtKB-UniRule"/>
</dbReference>
<dbReference type="GO" id="GO:0003723">
    <property type="term" value="F:RNA binding"/>
    <property type="evidence" value="ECO:0007669"/>
    <property type="project" value="UniProtKB-UniRule"/>
</dbReference>
<dbReference type="GO" id="GO:0006402">
    <property type="term" value="P:mRNA catabolic process"/>
    <property type="evidence" value="ECO:0007669"/>
    <property type="project" value="UniProtKB-UniRule"/>
</dbReference>
<dbReference type="GO" id="GO:0006396">
    <property type="term" value="P:RNA processing"/>
    <property type="evidence" value="ECO:0007669"/>
    <property type="project" value="InterPro"/>
</dbReference>
<dbReference type="CDD" id="cd02393">
    <property type="entry name" value="KH-I_PNPase"/>
    <property type="match status" value="1"/>
</dbReference>
<dbReference type="CDD" id="cd11363">
    <property type="entry name" value="RNase_PH_PNPase_1"/>
    <property type="match status" value="1"/>
</dbReference>
<dbReference type="CDD" id="cd11364">
    <property type="entry name" value="RNase_PH_PNPase_2"/>
    <property type="match status" value="1"/>
</dbReference>
<dbReference type="FunFam" id="3.30.1370.10:FF:000001">
    <property type="entry name" value="Polyribonucleotide nucleotidyltransferase"/>
    <property type="match status" value="1"/>
</dbReference>
<dbReference type="FunFam" id="3.30.230.70:FF:000001">
    <property type="entry name" value="Polyribonucleotide nucleotidyltransferase"/>
    <property type="match status" value="1"/>
</dbReference>
<dbReference type="FunFam" id="3.30.230.70:FF:000002">
    <property type="entry name" value="Polyribonucleotide nucleotidyltransferase"/>
    <property type="match status" value="1"/>
</dbReference>
<dbReference type="Gene3D" id="3.30.230.70">
    <property type="entry name" value="GHMP Kinase, N-terminal domain"/>
    <property type="match status" value="2"/>
</dbReference>
<dbReference type="Gene3D" id="3.30.1370.10">
    <property type="entry name" value="K Homology domain, type 1"/>
    <property type="match status" value="1"/>
</dbReference>
<dbReference type="Gene3D" id="2.40.50.140">
    <property type="entry name" value="Nucleic acid-binding proteins"/>
    <property type="match status" value="1"/>
</dbReference>
<dbReference type="HAMAP" id="MF_01595">
    <property type="entry name" value="PNPase"/>
    <property type="match status" value="1"/>
</dbReference>
<dbReference type="InterPro" id="IPR001247">
    <property type="entry name" value="ExoRNase_PH_dom1"/>
</dbReference>
<dbReference type="InterPro" id="IPR015847">
    <property type="entry name" value="ExoRNase_PH_dom2"/>
</dbReference>
<dbReference type="InterPro" id="IPR036345">
    <property type="entry name" value="ExoRNase_PH_dom2_sf"/>
</dbReference>
<dbReference type="InterPro" id="IPR004087">
    <property type="entry name" value="KH_dom"/>
</dbReference>
<dbReference type="InterPro" id="IPR004088">
    <property type="entry name" value="KH_dom_type_1"/>
</dbReference>
<dbReference type="InterPro" id="IPR036612">
    <property type="entry name" value="KH_dom_type_1_sf"/>
</dbReference>
<dbReference type="InterPro" id="IPR012340">
    <property type="entry name" value="NA-bd_OB-fold"/>
</dbReference>
<dbReference type="InterPro" id="IPR012162">
    <property type="entry name" value="PNPase"/>
</dbReference>
<dbReference type="InterPro" id="IPR027408">
    <property type="entry name" value="PNPase/RNase_PH_dom_sf"/>
</dbReference>
<dbReference type="InterPro" id="IPR015848">
    <property type="entry name" value="PNPase_PH_RNA-bd_bac/org-type"/>
</dbReference>
<dbReference type="InterPro" id="IPR036456">
    <property type="entry name" value="PNPase_PH_RNA-bd_sf"/>
</dbReference>
<dbReference type="InterPro" id="IPR020568">
    <property type="entry name" value="Ribosomal_Su5_D2-typ_SF"/>
</dbReference>
<dbReference type="InterPro" id="IPR003029">
    <property type="entry name" value="S1_domain"/>
</dbReference>
<dbReference type="NCBIfam" id="TIGR03591">
    <property type="entry name" value="polynuc_phos"/>
    <property type="match status" value="1"/>
</dbReference>
<dbReference type="NCBIfam" id="NF008805">
    <property type="entry name" value="PRK11824.1"/>
    <property type="match status" value="1"/>
</dbReference>
<dbReference type="PANTHER" id="PTHR11252">
    <property type="entry name" value="POLYRIBONUCLEOTIDE NUCLEOTIDYLTRANSFERASE"/>
    <property type="match status" value="1"/>
</dbReference>
<dbReference type="PANTHER" id="PTHR11252:SF0">
    <property type="entry name" value="POLYRIBONUCLEOTIDE NUCLEOTIDYLTRANSFERASE 1, MITOCHONDRIAL"/>
    <property type="match status" value="1"/>
</dbReference>
<dbReference type="Pfam" id="PF00013">
    <property type="entry name" value="KH_1"/>
    <property type="match status" value="1"/>
</dbReference>
<dbReference type="Pfam" id="PF03726">
    <property type="entry name" value="PNPase"/>
    <property type="match status" value="1"/>
</dbReference>
<dbReference type="Pfam" id="PF01138">
    <property type="entry name" value="RNase_PH"/>
    <property type="match status" value="2"/>
</dbReference>
<dbReference type="Pfam" id="PF03725">
    <property type="entry name" value="RNase_PH_C"/>
    <property type="match status" value="2"/>
</dbReference>
<dbReference type="Pfam" id="PF00575">
    <property type="entry name" value="S1"/>
    <property type="match status" value="1"/>
</dbReference>
<dbReference type="PIRSF" id="PIRSF005499">
    <property type="entry name" value="PNPase"/>
    <property type="match status" value="1"/>
</dbReference>
<dbReference type="SMART" id="SM00322">
    <property type="entry name" value="KH"/>
    <property type="match status" value="1"/>
</dbReference>
<dbReference type="SMART" id="SM00316">
    <property type="entry name" value="S1"/>
    <property type="match status" value="1"/>
</dbReference>
<dbReference type="SUPFAM" id="SSF54791">
    <property type="entry name" value="Eukaryotic type KH-domain (KH-domain type I)"/>
    <property type="match status" value="1"/>
</dbReference>
<dbReference type="SUPFAM" id="SSF50249">
    <property type="entry name" value="Nucleic acid-binding proteins"/>
    <property type="match status" value="1"/>
</dbReference>
<dbReference type="SUPFAM" id="SSF46915">
    <property type="entry name" value="Polynucleotide phosphorylase/guanosine pentaphosphate synthase (PNPase/GPSI), domain 3"/>
    <property type="match status" value="1"/>
</dbReference>
<dbReference type="SUPFAM" id="SSF55666">
    <property type="entry name" value="Ribonuclease PH domain 2-like"/>
    <property type="match status" value="2"/>
</dbReference>
<dbReference type="SUPFAM" id="SSF54211">
    <property type="entry name" value="Ribosomal protein S5 domain 2-like"/>
    <property type="match status" value="2"/>
</dbReference>
<dbReference type="PROSITE" id="PS50084">
    <property type="entry name" value="KH_TYPE_1"/>
    <property type="match status" value="1"/>
</dbReference>
<dbReference type="PROSITE" id="PS50126">
    <property type="entry name" value="S1"/>
    <property type="match status" value="1"/>
</dbReference>
<organism>
    <name type="scientific">Streptococcus thermophilus (strain ATCC BAA-491 / LMD-9)</name>
    <dbReference type="NCBI Taxonomy" id="322159"/>
    <lineage>
        <taxon>Bacteria</taxon>
        <taxon>Bacillati</taxon>
        <taxon>Bacillota</taxon>
        <taxon>Bacilli</taxon>
        <taxon>Lactobacillales</taxon>
        <taxon>Streptococcaceae</taxon>
        <taxon>Streptococcus</taxon>
    </lineage>
</organism>
<comment type="function">
    <text evidence="1">Involved in mRNA degradation. Catalyzes the phosphorolysis of single-stranded polyribonucleotides processively in the 3'- to 5'-direction.</text>
</comment>
<comment type="catalytic activity">
    <reaction evidence="1">
        <text>RNA(n+1) + phosphate = RNA(n) + a ribonucleoside 5'-diphosphate</text>
        <dbReference type="Rhea" id="RHEA:22096"/>
        <dbReference type="Rhea" id="RHEA-COMP:14527"/>
        <dbReference type="Rhea" id="RHEA-COMP:17342"/>
        <dbReference type="ChEBI" id="CHEBI:43474"/>
        <dbReference type="ChEBI" id="CHEBI:57930"/>
        <dbReference type="ChEBI" id="CHEBI:140395"/>
        <dbReference type="EC" id="2.7.7.8"/>
    </reaction>
</comment>
<comment type="cofactor">
    <cofactor evidence="1">
        <name>Mg(2+)</name>
        <dbReference type="ChEBI" id="CHEBI:18420"/>
    </cofactor>
</comment>
<comment type="subcellular location">
    <subcellularLocation>
        <location evidence="1">Cytoplasm</location>
    </subcellularLocation>
</comment>
<comment type="similarity">
    <text evidence="1">Belongs to the polyribonucleotide nucleotidyltransferase family.</text>
</comment>